<name>IF20A_XENLA</name>
<accession>Q90WZ0</accession>
<accession>Q5PQ52</accession>
<dbReference type="EMBL" id="AY048114">
    <property type="protein sequence ID" value="AAL07274.1"/>
    <property type="molecule type" value="mRNA"/>
</dbReference>
<dbReference type="EMBL" id="BC087360">
    <property type="protein sequence ID" value="AAH87360.1"/>
    <property type="molecule type" value="mRNA"/>
</dbReference>
<dbReference type="RefSeq" id="NP_001082135.1">
    <molecule id="Q90WZ0-1"/>
    <property type="nucleotide sequence ID" value="NM_001088666.1"/>
</dbReference>
<dbReference type="SMR" id="Q90WZ0"/>
<dbReference type="DNASU" id="398244"/>
<dbReference type="GeneID" id="398244"/>
<dbReference type="KEGG" id="xla:398244"/>
<dbReference type="AGR" id="Xenbase:XB-GENE-966393"/>
<dbReference type="CTD" id="398244"/>
<dbReference type="Xenbase" id="XB-GENE-966393">
    <property type="gene designation" value="ift20.L"/>
</dbReference>
<dbReference type="OMA" id="TMAKQRQ"/>
<dbReference type="OrthoDB" id="10254896at2759"/>
<dbReference type="Proteomes" id="UP000186698">
    <property type="component" value="Chromosome 2L"/>
</dbReference>
<dbReference type="Bgee" id="398244">
    <property type="expression patterns" value="Expressed in testis and 19 other cell types or tissues"/>
</dbReference>
<dbReference type="GO" id="GO:0005814">
    <property type="term" value="C:centriole"/>
    <property type="evidence" value="ECO:0007669"/>
    <property type="project" value="UniProtKB-SubCell"/>
</dbReference>
<dbReference type="GO" id="GO:0005813">
    <property type="term" value="C:centrosome"/>
    <property type="evidence" value="ECO:0000318"/>
    <property type="project" value="GO_Central"/>
</dbReference>
<dbReference type="GO" id="GO:0036064">
    <property type="term" value="C:ciliary basal body"/>
    <property type="evidence" value="ECO:0000318"/>
    <property type="project" value="GO_Central"/>
</dbReference>
<dbReference type="GO" id="GO:0097546">
    <property type="term" value="C:ciliary base"/>
    <property type="evidence" value="ECO:0000318"/>
    <property type="project" value="GO_Central"/>
</dbReference>
<dbReference type="GO" id="GO:0005929">
    <property type="term" value="C:cilium"/>
    <property type="evidence" value="ECO:0000250"/>
    <property type="project" value="UniProtKB"/>
</dbReference>
<dbReference type="GO" id="GO:0005737">
    <property type="term" value="C:cytoplasm"/>
    <property type="evidence" value="ECO:0000250"/>
    <property type="project" value="UniProtKB"/>
</dbReference>
<dbReference type="GO" id="GO:0005794">
    <property type="term" value="C:Golgi apparatus"/>
    <property type="evidence" value="ECO:0000250"/>
    <property type="project" value="UniProtKB"/>
</dbReference>
<dbReference type="GO" id="GO:0030990">
    <property type="term" value="C:intraciliary transport particle"/>
    <property type="evidence" value="ECO:0000318"/>
    <property type="project" value="GO_Central"/>
</dbReference>
<dbReference type="GO" id="GO:0043005">
    <property type="term" value="C:neuron projection"/>
    <property type="evidence" value="ECO:0000318"/>
    <property type="project" value="GO_Central"/>
</dbReference>
<dbReference type="GO" id="GO:0097730">
    <property type="term" value="C:non-motile cilium"/>
    <property type="evidence" value="ECO:0000318"/>
    <property type="project" value="GO_Central"/>
</dbReference>
<dbReference type="GO" id="GO:0030154">
    <property type="term" value="P:cell differentiation"/>
    <property type="evidence" value="ECO:0007669"/>
    <property type="project" value="UniProtKB-KW"/>
</dbReference>
<dbReference type="GO" id="GO:0060271">
    <property type="term" value="P:cilium assembly"/>
    <property type="evidence" value="ECO:0000318"/>
    <property type="project" value="GO_Central"/>
</dbReference>
<dbReference type="GO" id="GO:0061512">
    <property type="term" value="P:protein localization to cilium"/>
    <property type="evidence" value="ECO:0000318"/>
    <property type="project" value="GO_Central"/>
</dbReference>
<dbReference type="GO" id="GO:2000583">
    <property type="term" value="P:regulation of platelet-derived growth factor receptor-alpha signaling pathway"/>
    <property type="evidence" value="ECO:0000250"/>
    <property type="project" value="UniProtKB"/>
</dbReference>
<dbReference type="GO" id="GO:0007283">
    <property type="term" value="P:spermatogenesis"/>
    <property type="evidence" value="ECO:0000250"/>
    <property type="project" value="UniProtKB"/>
</dbReference>
<dbReference type="InterPro" id="IPR028172">
    <property type="entry name" value="FT20"/>
</dbReference>
<dbReference type="PANTHER" id="PTHR31978">
    <property type="entry name" value="INTRAFLAGELLAR TRANSPORT PROTEIN 20 HOMOLOG"/>
    <property type="match status" value="1"/>
</dbReference>
<dbReference type="PANTHER" id="PTHR31978:SF1">
    <property type="entry name" value="INTRAFLAGELLAR TRANSPORT PROTEIN 20 HOMOLOG"/>
    <property type="match status" value="1"/>
</dbReference>
<dbReference type="Pfam" id="PF14931">
    <property type="entry name" value="IFT20"/>
    <property type="match status" value="1"/>
</dbReference>
<feature type="chain" id="PRO_0000249306" description="Intraflagellar transport protein 20 homolog A">
    <location>
        <begin position="1"/>
        <end position="132"/>
    </location>
</feature>
<feature type="coiled-coil region" evidence="2">
    <location>
        <begin position="87"/>
        <end position="112"/>
    </location>
</feature>
<feature type="splice variant" id="VSP_020393" description="In isoform 2." evidence="3">
    <original>AIGARNLLKSIAKQREAQQQQLYALIAEKKMQLERYRIEYDALCKVEAEQNEFIDQFNLQK</original>
    <variation>CVYFVKGNRCPELVKIYSKAKRSPAAATICLNSREENATRKVPNRIRRSV</variation>
    <location>
        <begin position="72"/>
        <end position="132"/>
    </location>
</feature>
<protein>
    <recommendedName>
        <fullName>Intraflagellar transport protein 20 homolog A</fullName>
    </recommendedName>
</protein>
<proteinExistence type="evidence at transcript level"/>
<organism>
    <name type="scientific">Xenopus laevis</name>
    <name type="common">African clawed frog</name>
    <dbReference type="NCBI Taxonomy" id="8355"/>
    <lineage>
        <taxon>Eukaryota</taxon>
        <taxon>Metazoa</taxon>
        <taxon>Chordata</taxon>
        <taxon>Craniata</taxon>
        <taxon>Vertebrata</taxon>
        <taxon>Euteleostomi</taxon>
        <taxon>Amphibia</taxon>
        <taxon>Batrachia</taxon>
        <taxon>Anura</taxon>
        <taxon>Pipoidea</taxon>
        <taxon>Pipidae</taxon>
        <taxon>Xenopodinae</taxon>
        <taxon>Xenopus</taxon>
        <taxon>Xenopus</taxon>
    </lineage>
</organism>
<gene>
    <name type="primary">ift20-a</name>
</gene>
<sequence length="132" mass="15328">MARDSLSDAGLHFDELNKLRILDPDVSQQTTELKEECRDFVDKIGHFQKVVGGLIELVDELAKETENEKMKAIGARNLLKSIAKQREAQQQQLYALIAEKKMQLERYRIEYDALCKVEAEQNEFIDQFNLQK</sequence>
<evidence type="ECO:0000250" key="1">
    <source>
        <dbReference type="UniProtKB" id="Q61025"/>
    </source>
</evidence>
<evidence type="ECO:0000255" key="2"/>
<evidence type="ECO:0000303" key="3">
    <source ref="2"/>
</evidence>
<reference key="1">
    <citation type="journal article" date="2002" name="J. Cell Biol.">
        <title>The intraflagellar transport protein, IFT88, is essential for vertebrate photoreceptor assembly and maintenance.</title>
        <authorList>
            <person name="Pazour G.J."/>
            <person name="Baker S.A."/>
            <person name="Deane J.A."/>
            <person name="Cole D.G."/>
            <person name="Dickert B.L."/>
            <person name="Rosenbaum J.L."/>
            <person name="Witman G.B."/>
            <person name="Besharse J.C."/>
        </authorList>
    </citation>
    <scope>NUCLEOTIDE SEQUENCE [MRNA] (ISOFORM 1)</scope>
</reference>
<reference key="2">
    <citation type="submission" date="2004-12" db="EMBL/GenBank/DDBJ databases">
        <authorList>
            <consortium name="NIH - Xenopus Gene Collection (XGC) project"/>
        </authorList>
    </citation>
    <scope>NUCLEOTIDE SEQUENCE [LARGE SCALE MRNA] (ISOFORM 2)</scope>
    <source>
        <tissue>Testis</tissue>
    </source>
</reference>
<comment type="function">
    <text evidence="1">Involved in ciliary process assembly. May play a role in the trafficking of ciliary membrane proteins from the Golgi complex to the cilium. Regulates the platelet-derived growth factor receptor-alpha (PDGFRA) signaling pathway. Plays an important role in spermatogenesis, particularly spermiogenesis, when germ cells form flagella.</text>
</comment>
<comment type="subcellular location">
    <subcellularLocation>
        <location evidence="1">Golgi apparatus</location>
        <location evidence="1">cis-Golgi network</location>
    </subcellularLocation>
    <subcellularLocation>
        <location evidence="1">Cytoplasm</location>
        <location evidence="1">Cytoskeleton</location>
        <location evidence="1">Microtubule organizing center</location>
        <location evidence="1">Centrosome</location>
        <location evidence="1">Centriole</location>
    </subcellularLocation>
    <subcellularLocation>
        <location evidence="1">Cell projection</location>
        <location evidence="1">Cilium</location>
    </subcellularLocation>
    <subcellularLocation>
        <location evidence="1">Golgi apparatus</location>
    </subcellularLocation>
    <subcellularLocation>
        <location evidence="1">Cytoplasm</location>
    </subcellularLocation>
</comment>
<comment type="alternative products">
    <event type="alternative splicing"/>
    <isoform>
        <id>Q90WZ0-1</id>
        <name>1</name>
        <sequence type="displayed"/>
    </isoform>
    <isoform>
        <id>Q90WZ0-2</id>
        <name>2</name>
        <sequence type="described" ref="VSP_020393"/>
    </isoform>
</comment>
<keyword id="KW-0025">Alternative splicing</keyword>
<keyword id="KW-0966">Cell projection</keyword>
<keyword id="KW-0970">Cilium biogenesis/degradation</keyword>
<keyword id="KW-0175">Coiled coil</keyword>
<keyword id="KW-0963">Cytoplasm</keyword>
<keyword id="KW-0206">Cytoskeleton</keyword>
<keyword id="KW-0221">Differentiation</keyword>
<keyword id="KW-0333">Golgi apparatus</keyword>
<keyword id="KW-1185">Reference proteome</keyword>
<keyword id="KW-0744">Spermatogenesis</keyword>